<sequence>MADQLIKATAADGGIRAVGVISTRLTEEARARHKLSYVATAALGRAMTAGLLLASNMKREGSRVNLRIKGNGPLGGLLVDAGLDGTVRGYVDCPFVELPPNARGKLDVGGAIGREGYLYVVRDVGYGYPYSSTVELISGEVGDDVTHYLATSEQTPSALLLGVFVGAQGVTAAGGLLLQVMPKAARDEALVATLESRVSQLSGFTPLLRSGKTLPDMFEQLLGDLGLVILPEIQLLRFDCRCSFTRVLGALKMLGEAELQDMIEKDNGAEATCEFCSEVYQASSDHLAQLIDDLRTESVGS</sequence>
<dbReference type="EMBL" id="CP001287">
    <property type="protein sequence ID" value="ACK66868.1"/>
    <property type="molecule type" value="Genomic_DNA"/>
</dbReference>
<dbReference type="RefSeq" id="WP_012596134.1">
    <property type="nucleotide sequence ID" value="NC_011726.1"/>
</dbReference>
<dbReference type="SMR" id="B7JV16"/>
<dbReference type="STRING" id="41431.PCC8801_2869"/>
<dbReference type="KEGG" id="cyp:PCC8801_2869"/>
<dbReference type="eggNOG" id="COG1281">
    <property type="taxonomic scope" value="Bacteria"/>
</dbReference>
<dbReference type="HOGENOM" id="CLU_054493_1_0_3"/>
<dbReference type="OrthoDB" id="9776534at2"/>
<dbReference type="Proteomes" id="UP000008204">
    <property type="component" value="Chromosome"/>
</dbReference>
<dbReference type="GO" id="GO:0005737">
    <property type="term" value="C:cytoplasm"/>
    <property type="evidence" value="ECO:0007669"/>
    <property type="project" value="UniProtKB-SubCell"/>
</dbReference>
<dbReference type="GO" id="GO:0044183">
    <property type="term" value="F:protein folding chaperone"/>
    <property type="evidence" value="ECO:0007669"/>
    <property type="project" value="TreeGrafter"/>
</dbReference>
<dbReference type="GO" id="GO:0051082">
    <property type="term" value="F:unfolded protein binding"/>
    <property type="evidence" value="ECO:0007669"/>
    <property type="project" value="UniProtKB-UniRule"/>
</dbReference>
<dbReference type="GO" id="GO:0042026">
    <property type="term" value="P:protein refolding"/>
    <property type="evidence" value="ECO:0007669"/>
    <property type="project" value="TreeGrafter"/>
</dbReference>
<dbReference type="CDD" id="cd00498">
    <property type="entry name" value="Hsp33"/>
    <property type="match status" value="1"/>
</dbReference>
<dbReference type="Gene3D" id="3.55.30.10">
    <property type="entry name" value="Hsp33 domain"/>
    <property type="match status" value="1"/>
</dbReference>
<dbReference type="Gene3D" id="3.90.1280.10">
    <property type="entry name" value="HSP33 redox switch-like"/>
    <property type="match status" value="1"/>
</dbReference>
<dbReference type="HAMAP" id="MF_00117">
    <property type="entry name" value="HslO"/>
    <property type="match status" value="1"/>
</dbReference>
<dbReference type="InterPro" id="IPR000397">
    <property type="entry name" value="Heat_shock_Hsp33"/>
</dbReference>
<dbReference type="InterPro" id="IPR016154">
    <property type="entry name" value="Heat_shock_Hsp33_C"/>
</dbReference>
<dbReference type="InterPro" id="IPR016153">
    <property type="entry name" value="Heat_shock_Hsp33_N"/>
</dbReference>
<dbReference type="NCBIfam" id="NF001033">
    <property type="entry name" value="PRK00114.1"/>
    <property type="match status" value="1"/>
</dbReference>
<dbReference type="PANTHER" id="PTHR30111">
    <property type="entry name" value="33 KDA CHAPERONIN"/>
    <property type="match status" value="1"/>
</dbReference>
<dbReference type="PANTHER" id="PTHR30111:SF1">
    <property type="entry name" value="33 KDA CHAPERONIN"/>
    <property type="match status" value="1"/>
</dbReference>
<dbReference type="Pfam" id="PF01430">
    <property type="entry name" value="HSP33"/>
    <property type="match status" value="1"/>
</dbReference>
<dbReference type="PIRSF" id="PIRSF005261">
    <property type="entry name" value="Heat_shock_Hsp33"/>
    <property type="match status" value="1"/>
</dbReference>
<dbReference type="SUPFAM" id="SSF64397">
    <property type="entry name" value="Hsp33 domain"/>
    <property type="match status" value="1"/>
</dbReference>
<dbReference type="SUPFAM" id="SSF118352">
    <property type="entry name" value="HSP33 redox switch-like"/>
    <property type="match status" value="1"/>
</dbReference>
<name>HSLO_RIPO1</name>
<comment type="function">
    <text evidence="1">Redox regulated molecular chaperone. Protects both thermally unfolding and oxidatively damaged proteins from irreversible aggregation. Plays an important role in the bacterial defense system toward oxidative stress.</text>
</comment>
<comment type="subcellular location">
    <subcellularLocation>
        <location evidence="1">Cytoplasm</location>
    </subcellularLocation>
</comment>
<comment type="PTM">
    <text evidence="1">Under oxidizing conditions two disulfide bonds are formed involving the reactive cysteines. Under reducing conditions zinc is bound to the reactive cysteines and the protein is inactive.</text>
</comment>
<comment type="similarity">
    <text evidence="1">Belongs to the HSP33 family.</text>
</comment>
<reference key="1">
    <citation type="journal article" date="2011" name="MBio">
        <title>Novel metabolic attributes of the genus Cyanothece, comprising a group of unicellular nitrogen-fixing Cyanobacteria.</title>
        <authorList>
            <person name="Bandyopadhyay A."/>
            <person name="Elvitigala T."/>
            <person name="Welsh E."/>
            <person name="Stockel J."/>
            <person name="Liberton M."/>
            <person name="Min H."/>
            <person name="Sherman L.A."/>
            <person name="Pakrasi H.B."/>
        </authorList>
    </citation>
    <scope>NUCLEOTIDE SEQUENCE [LARGE SCALE GENOMIC DNA]</scope>
    <source>
        <strain>PCC 8801 / RF-1</strain>
    </source>
</reference>
<gene>
    <name evidence="1" type="primary">hslO</name>
    <name type="ordered locus">PCC8801_2869</name>
</gene>
<feature type="chain" id="PRO_1000190457" description="33 kDa chaperonin">
    <location>
        <begin position="1"/>
        <end position="301"/>
    </location>
</feature>
<feature type="disulfide bond" description="Redox-active" evidence="1">
    <location>
        <begin position="240"/>
        <end position="242"/>
    </location>
</feature>
<feature type="disulfide bond" description="Redox-active" evidence="1">
    <location>
        <begin position="273"/>
        <end position="276"/>
    </location>
</feature>
<accession>B7JV16</accession>
<evidence type="ECO:0000255" key="1">
    <source>
        <dbReference type="HAMAP-Rule" id="MF_00117"/>
    </source>
</evidence>
<organism>
    <name type="scientific">Rippkaea orientalis (strain PCC 8801 / RF-1)</name>
    <name type="common">Cyanothece sp. (strain PCC 8801)</name>
    <dbReference type="NCBI Taxonomy" id="41431"/>
    <lineage>
        <taxon>Bacteria</taxon>
        <taxon>Bacillati</taxon>
        <taxon>Cyanobacteriota</taxon>
        <taxon>Cyanophyceae</taxon>
        <taxon>Oscillatoriophycideae</taxon>
        <taxon>Chroococcales</taxon>
        <taxon>Aphanothecaceae</taxon>
        <taxon>Rippkaea</taxon>
        <taxon>Rippkaea orientalis</taxon>
    </lineage>
</organism>
<keyword id="KW-0143">Chaperone</keyword>
<keyword id="KW-0963">Cytoplasm</keyword>
<keyword id="KW-1015">Disulfide bond</keyword>
<keyword id="KW-0676">Redox-active center</keyword>
<keyword id="KW-1185">Reference proteome</keyword>
<keyword id="KW-0862">Zinc</keyword>
<proteinExistence type="inferred from homology"/>
<protein>
    <recommendedName>
        <fullName evidence="1">33 kDa chaperonin</fullName>
    </recommendedName>
    <alternativeName>
        <fullName evidence="1">Heat shock protein 33 homolog</fullName>
        <shortName evidence="1">HSP33</shortName>
    </alternativeName>
</protein>